<gene>
    <name evidence="1" type="primary">rpsI</name>
    <name type="ordered locus">DMR_15350</name>
</gene>
<feature type="chain" id="PRO_1000211830" description="Small ribosomal subunit protein uS9">
    <location>
        <begin position="1"/>
        <end position="130"/>
    </location>
</feature>
<feature type="region of interest" description="Disordered" evidence="2">
    <location>
        <begin position="108"/>
        <end position="130"/>
    </location>
</feature>
<comment type="similarity">
    <text evidence="1">Belongs to the universal ribosomal protein uS9 family.</text>
</comment>
<reference key="1">
    <citation type="journal article" date="2009" name="Genome Res.">
        <title>Whole genome sequence of Desulfovibrio magneticus strain RS-1 revealed common gene clusters in magnetotactic bacteria.</title>
        <authorList>
            <person name="Nakazawa H."/>
            <person name="Arakaki A."/>
            <person name="Narita-Yamada S."/>
            <person name="Yashiro I."/>
            <person name="Jinno K."/>
            <person name="Aoki N."/>
            <person name="Tsuruyama A."/>
            <person name="Okamura Y."/>
            <person name="Tanikawa S."/>
            <person name="Fujita N."/>
            <person name="Takeyama H."/>
            <person name="Matsunaga T."/>
        </authorList>
    </citation>
    <scope>NUCLEOTIDE SEQUENCE [LARGE SCALE GENOMIC DNA]</scope>
    <source>
        <strain>ATCC 700980 / DSM 13731 / RS-1</strain>
    </source>
</reference>
<dbReference type="EMBL" id="AP010904">
    <property type="protein sequence ID" value="BAH75026.1"/>
    <property type="molecule type" value="Genomic_DNA"/>
</dbReference>
<dbReference type="RefSeq" id="WP_015860232.1">
    <property type="nucleotide sequence ID" value="NC_012796.1"/>
</dbReference>
<dbReference type="SMR" id="C4XNQ1"/>
<dbReference type="STRING" id="573370.DMR_15350"/>
<dbReference type="KEGG" id="dma:DMR_15350"/>
<dbReference type="eggNOG" id="COG0103">
    <property type="taxonomic scope" value="Bacteria"/>
</dbReference>
<dbReference type="HOGENOM" id="CLU_046483_2_1_7"/>
<dbReference type="OrthoDB" id="9803965at2"/>
<dbReference type="Proteomes" id="UP000009071">
    <property type="component" value="Chromosome"/>
</dbReference>
<dbReference type="GO" id="GO:0022627">
    <property type="term" value="C:cytosolic small ribosomal subunit"/>
    <property type="evidence" value="ECO:0007669"/>
    <property type="project" value="TreeGrafter"/>
</dbReference>
<dbReference type="GO" id="GO:0003723">
    <property type="term" value="F:RNA binding"/>
    <property type="evidence" value="ECO:0007669"/>
    <property type="project" value="TreeGrafter"/>
</dbReference>
<dbReference type="GO" id="GO:0003735">
    <property type="term" value="F:structural constituent of ribosome"/>
    <property type="evidence" value="ECO:0007669"/>
    <property type="project" value="InterPro"/>
</dbReference>
<dbReference type="GO" id="GO:0006412">
    <property type="term" value="P:translation"/>
    <property type="evidence" value="ECO:0007669"/>
    <property type="project" value="UniProtKB-UniRule"/>
</dbReference>
<dbReference type="FunFam" id="3.30.230.10:FF:000001">
    <property type="entry name" value="30S ribosomal protein S9"/>
    <property type="match status" value="1"/>
</dbReference>
<dbReference type="Gene3D" id="3.30.230.10">
    <property type="match status" value="1"/>
</dbReference>
<dbReference type="HAMAP" id="MF_00532_B">
    <property type="entry name" value="Ribosomal_uS9_B"/>
    <property type="match status" value="1"/>
</dbReference>
<dbReference type="InterPro" id="IPR020568">
    <property type="entry name" value="Ribosomal_Su5_D2-typ_SF"/>
</dbReference>
<dbReference type="InterPro" id="IPR000754">
    <property type="entry name" value="Ribosomal_uS9"/>
</dbReference>
<dbReference type="InterPro" id="IPR023035">
    <property type="entry name" value="Ribosomal_uS9_bac/plastid"/>
</dbReference>
<dbReference type="InterPro" id="IPR020574">
    <property type="entry name" value="Ribosomal_uS9_CS"/>
</dbReference>
<dbReference type="InterPro" id="IPR014721">
    <property type="entry name" value="Ribsml_uS5_D2-typ_fold_subgr"/>
</dbReference>
<dbReference type="NCBIfam" id="NF001099">
    <property type="entry name" value="PRK00132.1"/>
    <property type="match status" value="1"/>
</dbReference>
<dbReference type="PANTHER" id="PTHR21569">
    <property type="entry name" value="RIBOSOMAL PROTEIN S9"/>
    <property type="match status" value="1"/>
</dbReference>
<dbReference type="PANTHER" id="PTHR21569:SF1">
    <property type="entry name" value="SMALL RIBOSOMAL SUBUNIT PROTEIN US9M"/>
    <property type="match status" value="1"/>
</dbReference>
<dbReference type="Pfam" id="PF00380">
    <property type="entry name" value="Ribosomal_S9"/>
    <property type="match status" value="1"/>
</dbReference>
<dbReference type="SUPFAM" id="SSF54211">
    <property type="entry name" value="Ribosomal protein S5 domain 2-like"/>
    <property type="match status" value="1"/>
</dbReference>
<dbReference type="PROSITE" id="PS00360">
    <property type="entry name" value="RIBOSOMAL_S9"/>
    <property type="match status" value="1"/>
</dbReference>
<name>RS9_SOLM1</name>
<proteinExistence type="inferred from homology"/>
<evidence type="ECO:0000255" key="1">
    <source>
        <dbReference type="HAMAP-Rule" id="MF_00532"/>
    </source>
</evidence>
<evidence type="ECO:0000256" key="2">
    <source>
        <dbReference type="SAM" id="MobiDB-lite"/>
    </source>
</evidence>
<evidence type="ECO:0000305" key="3"/>
<organism>
    <name type="scientific">Solidesulfovibrio magneticus (strain ATCC 700980 / DSM 13731 / RS-1)</name>
    <name type="common">Desulfovibrio magneticus</name>
    <dbReference type="NCBI Taxonomy" id="573370"/>
    <lineage>
        <taxon>Bacteria</taxon>
        <taxon>Pseudomonadati</taxon>
        <taxon>Thermodesulfobacteriota</taxon>
        <taxon>Desulfovibrionia</taxon>
        <taxon>Desulfovibrionales</taxon>
        <taxon>Desulfovibrionaceae</taxon>
        <taxon>Solidesulfovibrio</taxon>
    </lineage>
</organism>
<keyword id="KW-0687">Ribonucleoprotein</keyword>
<keyword id="KW-0689">Ribosomal protein</keyword>
<accession>C4XNQ1</accession>
<protein>
    <recommendedName>
        <fullName evidence="1">Small ribosomal subunit protein uS9</fullName>
    </recommendedName>
    <alternativeName>
        <fullName evidence="3">30S ribosomal protein S9</fullName>
    </alternativeName>
</protein>
<sequence length="130" mass="14713">MSDEFYYGTGRRKSAVARTRLYKGNGRILVNDRPFEEYFPRPTLLAIVRQALALTKLEGRLDVKVNVAGGGMTGQAEAVRHGISRALCILDPELRGVLKKAGLLTRDSREKERKKYGQRGARARFQYSKR</sequence>